<dbReference type="EMBL" id="AJ238804">
    <property type="protein sequence ID" value="CAB43522.1"/>
    <property type="molecule type" value="mRNA"/>
</dbReference>
<dbReference type="EMBL" id="AF159802">
    <property type="protein sequence ID" value="AAF76931.1"/>
    <property type="molecule type" value="mRNA"/>
</dbReference>
<dbReference type="EMBL" id="AL133452">
    <property type="protein sequence ID" value="CAB63024.1"/>
    <property type="molecule type" value="Genomic_DNA"/>
</dbReference>
<dbReference type="EMBL" id="CP002686">
    <property type="protein sequence ID" value="AEE78811.1"/>
    <property type="molecule type" value="Genomic_DNA"/>
</dbReference>
<dbReference type="EMBL" id="AY058111">
    <property type="protein sequence ID" value="AAL25528.1"/>
    <property type="molecule type" value="mRNA"/>
</dbReference>
<dbReference type="EMBL" id="AY094052">
    <property type="protein sequence ID" value="AAM16208.1"/>
    <property type="molecule type" value="mRNA"/>
</dbReference>
<dbReference type="EMBL" id="AY088614">
    <property type="protein sequence ID" value="AAM66937.1"/>
    <property type="status" value="ALT_INIT"/>
    <property type="molecule type" value="mRNA"/>
</dbReference>
<dbReference type="EMBL" id="Z18392">
    <property type="protein sequence ID" value="CAA79179.1"/>
    <property type="molecule type" value="mRNA"/>
</dbReference>
<dbReference type="PIR" id="T45791">
    <property type="entry name" value="T45791"/>
</dbReference>
<dbReference type="RefSeq" id="NP_190728.1">
    <property type="nucleotide sequence ID" value="NM_115019.3"/>
</dbReference>
<dbReference type="SMR" id="Q9XFS7"/>
<dbReference type="BioGRID" id="9641">
    <property type="interactions" value="1"/>
</dbReference>
<dbReference type="FunCoup" id="Q9XFS7">
    <property type="interactions" value="848"/>
</dbReference>
<dbReference type="STRING" id="3702.Q9XFS7"/>
<dbReference type="iPTMnet" id="Q9XFS7"/>
<dbReference type="PaxDb" id="3702-AT3G51600.1"/>
<dbReference type="ProteomicsDB" id="251063"/>
<dbReference type="EnsemblPlants" id="AT3G51600.1">
    <property type="protein sequence ID" value="AT3G51600.1"/>
    <property type="gene ID" value="AT3G51600"/>
</dbReference>
<dbReference type="GeneID" id="824323"/>
<dbReference type="Gramene" id="AT3G51600.1">
    <property type="protein sequence ID" value="AT3G51600.1"/>
    <property type="gene ID" value="AT3G51600"/>
</dbReference>
<dbReference type="KEGG" id="ath:AT3G51600"/>
<dbReference type="Araport" id="AT3G51600"/>
<dbReference type="TAIR" id="AT3G51600">
    <property type="gene designation" value="LTP5"/>
</dbReference>
<dbReference type="eggNOG" id="ENOG502S4CI">
    <property type="taxonomic scope" value="Eukaryota"/>
</dbReference>
<dbReference type="HOGENOM" id="CLU_128423_0_0_1"/>
<dbReference type="InParanoid" id="Q9XFS7"/>
<dbReference type="OMA" id="FIPRGCC"/>
<dbReference type="OrthoDB" id="1890443at2759"/>
<dbReference type="PhylomeDB" id="Q9XFS7"/>
<dbReference type="PRO" id="PR:Q9XFS7"/>
<dbReference type="Proteomes" id="UP000006548">
    <property type="component" value="Chromosome 3"/>
</dbReference>
<dbReference type="ExpressionAtlas" id="Q9XFS7">
    <property type="expression patterns" value="baseline and differential"/>
</dbReference>
<dbReference type="GO" id="GO:0005829">
    <property type="term" value="C:cytosol"/>
    <property type="evidence" value="ECO:0007005"/>
    <property type="project" value="TAIR"/>
</dbReference>
<dbReference type="GO" id="GO:0009506">
    <property type="term" value="C:plasmodesma"/>
    <property type="evidence" value="ECO:0007005"/>
    <property type="project" value="TAIR"/>
</dbReference>
<dbReference type="GO" id="GO:0008289">
    <property type="term" value="F:lipid binding"/>
    <property type="evidence" value="ECO:0007669"/>
    <property type="project" value="UniProtKB-KW"/>
</dbReference>
<dbReference type="GO" id="GO:0006869">
    <property type="term" value="P:lipid transport"/>
    <property type="evidence" value="ECO:0007669"/>
    <property type="project" value="InterPro"/>
</dbReference>
<dbReference type="CDD" id="cd01960">
    <property type="entry name" value="nsLTP1"/>
    <property type="match status" value="1"/>
</dbReference>
<dbReference type="FunFam" id="1.10.110.10:FF:000002">
    <property type="entry name" value="Non-specific lipid-transfer protein"/>
    <property type="match status" value="1"/>
</dbReference>
<dbReference type="Gene3D" id="1.10.110.10">
    <property type="entry name" value="Plant lipid-transfer and hydrophobic proteins"/>
    <property type="match status" value="1"/>
</dbReference>
<dbReference type="InterPro" id="IPR036312">
    <property type="entry name" value="Bifun_inhib/LTP/seed_sf"/>
</dbReference>
<dbReference type="InterPro" id="IPR016140">
    <property type="entry name" value="Bifunc_inhib/LTP/seed_store"/>
</dbReference>
<dbReference type="InterPro" id="IPR000528">
    <property type="entry name" value="Plant_nsLTP"/>
</dbReference>
<dbReference type="PANTHER" id="PTHR33076">
    <property type="entry name" value="NON-SPECIFIC LIPID-TRANSFER PROTEIN 2-RELATED"/>
    <property type="match status" value="1"/>
</dbReference>
<dbReference type="Pfam" id="PF00234">
    <property type="entry name" value="Tryp_alpha_amyl"/>
    <property type="match status" value="1"/>
</dbReference>
<dbReference type="PRINTS" id="PR00382">
    <property type="entry name" value="LIPIDTRNSFER"/>
</dbReference>
<dbReference type="SMART" id="SM00499">
    <property type="entry name" value="AAI"/>
    <property type="match status" value="1"/>
</dbReference>
<dbReference type="SUPFAM" id="SSF47699">
    <property type="entry name" value="Bifunctional inhibitor/lipid-transfer protein/seed storage 2S albumin"/>
    <property type="match status" value="1"/>
</dbReference>
<dbReference type="PROSITE" id="PS00597">
    <property type="entry name" value="PLANT_LTP"/>
    <property type="match status" value="1"/>
</dbReference>
<sequence length="118" mass="12495">MEGLLKLSTLVIVCMLVTAPMASEAAISCGAVTGSLGQCYNYLTRGGFIPRGCCSGVQRLNSLARTTRDRQQACRCIQGAARALGSRLNAGRAARLPGACRVRISYPISARTNCNTVR</sequence>
<comment type="function">
    <text evidence="1">Plant non-specific lipid-transfer proteins transfer phospholipids as well as galactolipids across membranes. May play a role in wax or cutin deposition in the cell walls of expanding epidermal cells and certain secretory tissues (By similarity).</text>
</comment>
<comment type="similarity">
    <text evidence="4">Belongs to the plant LTP family.</text>
</comment>
<comment type="sequence caution" evidence="4">
    <conflict type="erroneous initiation">
        <sequence resource="EMBL-CDS" id="AAM66937"/>
    </conflict>
</comment>
<proteinExistence type="evidence at protein level"/>
<protein>
    <recommendedName>
        <fullName>Non-specific lipid-transfer protein 5</fullName>
        <shortName>LTP 5</shortName>
    </recommendedName>
</protein>
<keyword id="KW-0903">Direct protein sequencing</keyword>
<keyword id="KW-1015">Disulfide bond</keyword>
<keyword id="KW-0446">Lipid-binding</keyword>
<keyword id="KW-1185">Reference proteome</keyword>
<keyword id="KW-0732">Signal</keyword>
<keyword id="KW-0813">Transport</keyword>
<accession>Q9XFS7</accession>
<accession>Q42005</accession>
<accession>Q8L966</accession>
<gene>
    <name type="primary">LTP5</name>
    <name type="ordered locus">At3g51600</name>
    <name type="ORF">F26O13.240</name>
</gene>
<feature type="signal peptide" evidence="3">
    <location>
        <begin position="1"/>
        <end position="25"/>
    </location>
</feature>
<feature type="chain" id="PRO_0000018365" description="Non-specific lipid-transfer protein 5">
    <location>
        <begin position="26"/>
        <end position="118"/>
    </location>
</feature>
<feature type="disulfide bond" evidence="2">
    <location>
        <begin position="29"/>
        <end position="76"/>
    </location>
</feature>
<feature type="disulfide bond" evidence="2">
    <location>
        <begin position="39"/>
        <end position="53"/>
    </location>
</feature>
<feature type="disulfide bond" evidence="2">
    <location>
        <begin position="54"/>
        <end position="100"/>
    </location>
</feature>
<feature type="disulfide bond" evidence="2">
    <location>
        <begin position="74"/>
        <end position="114"/>
    </location>
</feature>
<feature type="sequence conflict" description="In Ref. 7; CAA79179." evidence="4" ref="7">
    <original>R</original>
    <variation>C</variation>
    <location>
        <position position="75"/>
    </location>
</feature>
<feature type="sequence conflict" description="In Ref. 7; CAA79179." evidence="4" ref="7">
    <original>Q</original>
    <variation>P</variation>
    <location>
        <position position="78"/>
    </location>
</feature>
<organism>
    <name type="scientific">Arabidopsis thaliana</name>
    <name type="common">Mouse-ear cress</name>
    <dbReference type="NCBI Taxonomy" id="3702"/>
    <lineage>
        <taxon>Eukaryota</taxon>
        <taxon>Viridiplantae</taxon>
        <taxon>Streptophyta</taxon>
        <taxon>Embryophyta</taxon>
        <taxon>Tracheophyta</taxon>
        <taxon>Spermatophyta</taxon>
        <taxon>Magnoliopsida</taxon>
        <taxon>eudicotyledons</taxon>
        <taxon>Gunneridae</taxon>
        <taxon>Pentapetalae</taxon>
        <taxon>rosids</taxon>
        <taxon>malvids</taxon>
        <taxon>Brassicales</taxon>
        <taxon>Brassicaceae</taxon>
        <taxon>Camelineae</taxon>
        <taxon>Arabidopsis</taxon>
    </lineage>
</organism>
<reference key="1">
    <citation type="submission" date="1999-05" db="EMBL/GenBank/DDBJ databases">
        <authorList>
            <person name="Cooke R.M."/>
        </authorList>
    </citation>
    <scope>NUCLEOTIDE SEQUENCE [MRNA]</scope>
</reference>
<reference key="2">
    <citation type="journal article" date="2000" name="Plant Sci.">
        <title>Lipid transfer proteins are encoded by a small multigene family in Arabidopsis thaliana.</title>
        <authorList>
            <person name="Arondel V.A."/>
            <person name="Vergnolle C."/>
            <person name="Cantrel C."/>
            <person name="Kader J.-C."/>
        </authorList>
    </citation>
    <scope>NUCLEOTIDE SEQUENCE [MRNA]</scope>
    <source>
        <strain>cv. Columbia</strain>
    </source>
</reference>
<reference key="3">
    <citation type="journal article" date="2000" name="Nature">
        <title>Sequence and analysis of chromosome 3 of the plant Arabidopsis thaliana.</title>
        <authorList>
            <person name="Salanoubat M."/>
            <person name="Lemcke K."/>
            <person name="Rieger M."/>
            <person name="Ansorge W."/>
            <person name="Unseld M."/>
            <person name="Fartmann B."/>
            <person name="Valle G."/>
            <person name="Bloecker H."/>
            <person name="Perez-Alonso M."/>
            <person name="Obermaier B."/>
            <person name="Delseny M."/>
            <person name="Boutry M."/>
            <person name="Grivell L.A."/>
            <person name="Mache R."/>
            <person name="Puigdomenech P."/>
            <person name="De Simone V."/>
            <person name="Choisne N."/>
            <person name="Artiguenave F."/>
            <person name="Robert C."/>
            <person name="Brottier P."/>
            <person name="Wincker P."/>
            <person name="Cattolico L."/>
            <person name="Weissenbach J."/>
            <person name="Saurin W."/>
            <person name="Quetier F."/>
            <person name="Schaefer M."/>
            <person name="Mueller-Auer S."/>
            <person name="Gabel C."/>
            <person name="Fuchs M."/>
            <person name="Benes V."/>
            <person name="Wurmbach E."/>
            <person name="Drzonek H."/>
            <person name="Erfle H."/>
            <person name="Jordan N."/>
            <person name="Bangert S."/>
            <person name="Wiedelmann R."/>
            <person name="Kranz H."/>
            <person name="Voss H."/>
            <person name="Holland R."/>
            <person name="Brandt P."/>
            <person name="Nyakatura G."/>
            <person name="Vezzi A."/>
            <person name="D'Angelo M."/>
            <person name="Pallavicini A."/>
            <person name="Toppo S."/>
            <person name="Simionati B."/>
            <person name="Conrad A."/>
            <person name="Hornischer K."/>
            <person name="Kauer G."/>
            <person name="Loehnert T.-H."/>
            <person name="Nordsiek G."/>
            <person name="Reichelt J."/>
            <person name="Scharfe M."/>
            <person name="Schoen O."/>
            <person name="Bargues M."/>
            <person name="Terol J."/>
            <person name="Climent J."/>
            <person name="Navarro P."/>
            <person name="Collado C."/>
            <person name="Perez-Perez A."/>
            <person name="Ottenwaelder B."/>
            <person name="Duchemin D."/>
            <person name="Cooke R."/>
            <person name="Laudie M."/>
            <person name="Berger-Llauro C."/>
            <person name="Purnelle B."/>
            <person name="Masuy D."/>
            <person name="de Haan M."/>
            <person name="Maarse A.C."/>
            <person name="Alcaraz J.-P."/>
            <person name="Cottet A."/>
            <person name="Casacuberta E."/>
            <person name="Monfort A."/>
            <person name="Argiriou A."/>
            <person name="Flores M."/>
            <person name="Liguori R."/>
            <person name="Vitale D."/>
            <person name="Mannhaupt G."/>
            <person name="Haase D."/>
            <person name="Schoof H."/>
            <person name="Rudd S."/>
            <person name="Zaccaria P."/>
            <person name="Mewes H.-W."/>
            <person name="Mayer K.F.X."/>
            <person name="Kaul S."/>
            <person name="Town C.D."/>
            <person name="Koo H.L."/>
            <person name="Tallon L.J."/>
            <person name="Jenkins J."/>
            <person name="Rooney T."/>
            <person name="Rizzo M."/>
            <person name="Walts A."/>
            <person name="Utterback T."/>
            <person name="Fujii C.Y."/>
            <person name="Shea T.P."/>
            <person name="Creasy T.H."/>
            <person name="Haas B."/>
            <person name="Maiti R."/>
            <person name="Wu D."/>
            <person name="Peterson J."/>
            <person name="Van Aken S."/>
            <person name="Pai G."/>
            <person name="Militscher J."/>
            <person name="Sellers P."/>
            <person name="Gill J.E."/>
            <person name="Feldblyum T.V."/>
            <person name="Preuss D."/>
            <person name="Lin X."/>
            <person name="Nierman W.C."/>
            <person name="Salzberg S.L."/>
            <person name="White O."/>
            <person name="Venter J.C."/>
            <person name="Fraser C.M."/>
            <person name="Kaneko T."/>
            <person name="Nakamura Y."/>
            <person name="Sato S."/>
            <person name="Kato T."/>
            <person name="Asamizu E."/>
            <person name="Sasamoto S."/>
            <person name="Kimura T."/>
            <person name="Idesawa K."/>
            <person name="Kawashima K."/>
            <person name="Kishida Y."/>
            <person name="Kiyokawa C."/>
            <person name="Kohara M."/>
            <person name="Matsumoto M."/>
            <person name="Matsuno A."/>
            <person name="Muraki A."/>
            <person name="Nakayama S."/>
            <person name="Nakazaki N."/>
            <person name="Shinpo S."/>
            <person name="Takeuchi C."/>
            <person name="Wada T."/>
            <person name="Watanabe A."/>
            <person name="Yamada M."/>
            <person name="Yasuda M."/>
            <person name="Tabata S."/>
        </authorList>
    </citation>
    <scope>NUCLEOTIDE SEQUENCE [LARGE SCALE GENOMIC DNA]</scope>
    <source>
        <strain>cv. Columbia</strain>
    </source>
</reference>
<reference key="4">
    <citation type="journal article" date="2017" name="Plant J.">
        <title>Araport11: a complete reannotation of the Arabidopsis thaliana reference genome.</title>
        <authorList>
            <person name="Cheng C.Y."/>
            <person name="Krishnakumar V."/>
            <person name="Chan A.P."/>
            <person name="Thibaud-Nissen F."/>
            <person name="Schobel S."/>
            <person name="Town C.D."/>
        </authorList>
    </citation>
    <scope>GENOME REANNOTATION</scope>
    <source>
        <strain>cv. Columbia</strain>
    </source>
</reference>
<reference key="5">
    <citation type="journal article" date="2003" name="Science">
        <title>Empirical analysis of transcriptional activity in the Arabidopsis genome.</title>
        <authorList>
            <person name="Yamada K."/>
            <person name="Lim J."/>
            <person name="Dale J.M."/>
            <person name="Chen H."/>
            <person name="Shinn P."/>
            <person name="Palm C.J."/>
            <person name="Southwick A.M."/>
            <person name="Wu H.C."/>
            <person name="Kim C.J."/>
            <person name="Nguyen M."/>
            <person name="Pham P.K."/>
            <person name="Cheuk R.F."/>
            <person name="Karlin-Newmann G."/>
            <person name="Liu S.X."/>
            <person name="Lam B."/>
            <person name="Sakano H."/>
            <person name="Wu T."/>
            <person name="Yu G."/>
            <person name="Miranda M."/>
            <person name="Quach H.L."/>
            <person name="Tripp M."/>
            <person name="Chang C.H."/>
            <person name="Lee J.M."/>
            <person name="Toriumi M.J."/>
            <person name="Chan M.M."/>
            <person name="Tang C.C."/>
            <person name="Onodera C.S."/>
            <person name="Deng J.M."/>
            <person name="Akiyama K."/>
            <person name="Ansari Y."/>
            <person name="Arakawa T."/>
            <person name="Banh J."/>
            <person name="Banno F."/>
            <person name="Bowser L."/>
            <person name="Brooks S.Y."/>
            <person name="Carninci P."/>
            <person name="Chao Q."/>
            <person name="Choy N."/>
            <person name="Enju A."/>
            <person name="Goldsmith A.D."/>
            <person name="Gurjal M."/>
            <person name="Hansen N.F."/>
            <person name="Hayashizaki Y."/>
            <person name="Johnson-Hopson C."/>
            <person name="Hsuan V.W."/>
            <person name="Iida K."/>
            <person name="Karnes M."/>
            <person name="Khan S."/>
            <person name="Koesema E."/>
            <person name="Ishida J."/>
            <person name="Jiang P.X."/>
            <person name="Jones T."/>
            <person name="Kawai J."/>
            <person name="Kamiya A."/>
            <person name="Meyers C."/>
            <person name="Nakajima M."/>
            <person name="Narusaka M."/>
            <person name="Seki M."/>
            <person name="Sakurai T."/>
            <person name="Satou M."/>
            <person name="Tamse R."/>
            <person name="Vaysberg M."/>
            <person name="Wallender E.K."/>
            <person name="Wong C."/>
            <person name="Yamamura Y."/>
            <person name="Yuan S."/>
            <person name="Shinozaki K."/>
            <person name="Davis R.W."/>
            <person name="Theologis A."/>
            <person name="Ecker J.R."/>
        </authorList>
    </citation>
    <scope>NUCLEOTIDE SEQUENCE [LARGE SCALE MRNA]</scope>
    <source>
        <strain>cv. Columbia</strain>
    </source>
</reference>
<reference key="6">
    <citation type="submission" date="2002-03" db="EMBL/GenBank/DDBJ databases">
        <title>Full-length cDNA from Arabidopsis thaliana.</title>
        <authorList>
            <person name="Brover V.V."/>
            <person name="Troukhan M.E."/>
            <person name="Alexandrov N.A."/>
            <person name="Lu Y.-P."/>
            <person name="Flavell R.B."/>
            <person name="Feldmann K.A."/>
        </authorList>
    </citation>
    <scope>NUCLEOTIDE SEQUENCE [LARGE SCALE MRNA] OF 15-118</scope>
</reference>
<reference key="7">
    <citation type="journal article" date="1993" name="Plant J.">
        <title>An inventory of 1152 expressed sequence tags obtained by partial sequencing of cDNAs from Arabidopsis thaliana.</title>
        <authorList>
            <person name="Hoefte H."/>
            <person name="Desprez T."/>
            <person name="Amselem J."/>
            <person name="Chiapello H."/>
            <person name="Rouze P."/>
            <person name="Caboche M."/>
            <person name="Moisan A."/>
            <person name="Jourjon M.-F."/>
            <person name="Charpenteau J.-L."/>
            <person name="Berthomieu P."/>
            <person name="Guerrier D."/>
            <person name="Giraudat J."/>
            <person name="Quigley F."/>
            <person name="Thomas F."/>
            <person name="Yu D.-Y."/>
            <person name="Mache R."/>
            <person name="Raynal M."/>
            <person name="Cooke R."/>
            <person name="Grellet F."/>
            <person name="Delseny M."/>
            <person name="Parmentier Y."/>
            <person name="de Marcillac G."/>
            <person name="Gigot C."/>
            <person name="Fleck J."/>
            <person name="Philipps G."/>
            <person name="Axelos M."/>
            <person name="Bardet C."/>
            <person name="Tremousaygue D."/>
            <person name="Lescure B."/>
        </authorList>
    </citation>
    <scope>NUCLEOTIDE SEQUENCE [LARGE SCALE MRNA] OF 24-79</scope>
    <source>
        <strain>cv. Columbia</strain>
        <tissue>Flower bud</tissue>
    </source>
</reference>
<reference key="8">
    <citation type="journal article" date="1993" name="FEBS Lett.">
        <title>Purification and antipathogenic activity of lipid transfer proteins (LTPs) from the leaves of Arabidopsis and spinach.</title>
        <authorList>
            <person name="Segura A."/>
            <person name="Moreno M."/>
            <person name="Garcia-Olmedo F."/>
        </authorList>
    </citation>
    <scope>PROTEIN SEQUENCE OF 26-43</scope>
    <source>
        <strain>cv. Columbia</strain>
    </source>
</reference>
<reference key="9">
    <citation type="journal article" date="2008" name="Plant Physiol. Biochem.">
        <title>Plant pathogenesis-related (PR) proteins: a focus on PR peptides.</title>
        <authorList>
            <person name="Sels J."/>
            <person name="Mathys J."/>
            <person name="De Coninck B.M.A."/>
            <person name="Cammue B.P.A."/>
            <person name="De Bolle M.F.C."/>
        </authorList>
    </citation>
    <scope>GENE FAMILY</scope>
    <scope>NOMENCLATURE</scope>
</reference>
<name>NLTP5_ARATH</name>
<evidence type="ECO:0000250" key="1"/>
<evidence type="ECO:0000255" key="2"/>
<evidence type="ECO:0000269" key="3">
    <source>
    </source>
</evidence>
<evidence type="ECO:0000305" key="4"/>